<organism>
    <name type="scientific">Mycolicibacterium smegmatis (strain ATCC 700084 / mc(2)155)</name>
    <name type="common">Mycobacterium smegmatis</name>
    <dbReference type="NCBI Taxonomy" id="246196"/>
    <lineage>
        <taxon>Bacteria</taxon>
        <taxon>Bacillati</taxon>
        <taxon>Actinomycetota</taxon>
        <taxon>Actinomycetes</taxon>
        <taxon>Mycobacteriales</taxon>
        <taxon>Mycobacteriaceae</taxon>
        <taxon>Mycolicibacterium</taxon>
    </lineage>
</organism>
<dbReference type="EMBL" id="CP000480">
    <property type="protein sequence ID" value="ABK70376.1"/>
    <property type="molecule type" value="Genomic_DNA"/>
</dbReference>
<dbReference type="EMBL" id="CP001663">
    <property type="protein sequence ID" value="AFP38929.1"/>
    <property type="molecule type" value="Genomic_DNA"/>
</dbReference>
<dbReference type="RefSeq" id="WP_003893881.1">
    <property type="nucleotide sequence ID" value="NZ_SIJM01000029.1"/>
</dbReference>
<dbReference type="RefSeq" id="YP_886857.1">
    <property type="nucleotide sequence ID" value="NC_008596.1"/>
</dbReference>
<dbReference type="SMR" id="A0QVB9"/>
<dbReference type="STRING" id="246196.MSMEG_2520"/>
<dbReference type="PaxDb" id="246196-MSMEI_2461"/>
<dbReference type="GeneID" id="93457309"/>
<dbReference type="KEGG" id="msb:LJ00_12545"/>
<dbReference type="KEGG" id="msg:MSMEI_2461"/>
<dbReference type="KEGG" id="msm:MSMEG_2520"/>
<dbReference type="PATRIC" id="fig|246196.19.peg.2487"/>
<dbReference type="eggNOG" id="COG0264">
    <property type="taxonomic scope" value="Bacteria"/>
</dbReference>
<dbReference type="OrthoDB" id="9808348at2"/>
<dbReference type="Proteomes" id="UP000000757">
    <property type="component" value="Chromosome"/>
</dbReference>
<dbReference type="Proteomes" id="UP000006158">
    <property type="component" value="Chromosome"/>
</dbReference>
<dbReference type="GO" id="GO:0005737">
    <property type="term" value="C:cytoplasm"/>
    <property type="evidence" value="ECO:0007669"/>
    <property type="project" value="UniProtKB-SubCell"/>
</dbReference>
<dbReference type="GO" id="GO:0003746">
    <property type="term" value="F:translation elongation factor activity"/>
    <property type="evidence" value="ECO:0007669"/>
    <property type="project" value="UniProtKB-UniRule"/>
</dbReference>
<dbReference type="CDD" id="cd14275">
    <property type="entry name" value="UBA_EF-Ts"/>
    <property type="match status" value="1"/>
</dbReference>
<dbReference type="FunFam" id="1.10.286.20:FF:000001">
    <property type="entry name" value="Elongation factor Ts"/>
    <property type="match status" value="1"/>
</dbReference>
<dbReference type="FunFam" id="1.10.8.10:FF:000001">
    <property type="entry name" value="Elongation factor Ts"/>
    <property type="match status" value="1"/>
</dbReference>
<dbReference type="Gene3D" id="1.10.286.20">
    <property type="match status" value="1"/>
</dbReference>
<dbReference type="Gene3D" id="1.10.8.10">
    <property type="entry name" value="DNA helicase RuvA subunit, C-terminal domain"/>
    <property type="match status" value="1"/>
</dbReference>
<dbReference type="Gene3D" id="3.30.479.20">
    <property type="entry name" value="Elongation factor Ts, dimerisation domain"/>
    <property type="match status" value="2"/>
</dbReference>
<dbReference type="HAMAP" id="MF_00050">
    <property type="entry name" value="EF_Ts"/>
    <property type="match status" value="1"/>
</dbReference>
<dbReference type="InterPro" id="IPR036402">
    <property type="entry name" value="EF-Ts_dimer_sf"/>
</dbReference>
<dbReference type="InterPro" id="IPR001816">
    <property type="entry name" value="Transl_elong_EFTs/EF1B"/>
</dbReference>
<dbReference type="InterPro" id="IPR014039">
    <property type="entry name" value="Transl_elong_EFTs/EF1B_dimer"/>
</dbReference>
<dbReference type="InterPro" id="IPR018101">
    <property type="entry name" value="Transl_elong_Ts_CS"/>
</dbReference>
<dbReference type="InterPro" id="IPR009060">
    <property type="entry name" value="UBA-like_sf"/>
</dbReference>
<dbReference type="NCBIfam" id="TIGR00116">
    <property type="entry name" value="tsf"/>
    <property type="match status" value="1"/>
</dbReference>
<dbReference type="PANTHER" id="PTHR11741">
    <property type="entry name" value="ELONGATION FACTOR TS"/>
    <property type="match status" value="1"/>
</dbReference>
<dbReference type="PANTHER" id="PTHR11741:SF0">
    <property type="entry name" value="ELONGATION FACTOR TS, MITOCHONDRIAL"/>
    <property type="match status" value="1"/>
</dbReference>
<dbReference type="Pfam" id="PF00889">
    <property type="entry name" value="EF_TS"/>
    <property type="match status" value="1"/>
</dbReference>
<dbReference type="SUPFAM" id="SSF54713">
    <property type="entry name" value="Elongation factor Ts (EF-Ts), dimerisation domain"/>
    <property type="match status" value="1"/>
</dbReference>
<dbReference type="SUPFAM" id="SSF46934">
    <property type="entry name" value="UBA-like"/>
    <property type="match status" value="1"/>
</dbReference>
<dbReference type="PROSITE" id="PS01126">
    <property type="entry name" value="EF_TS_1"/>
    <property type="match status" value="1"/>
</dbReference>
<dbReference type="PROSITE" id="PS01127">
    <property type="entry name" value="EF_TS_2"/>
    <property type="match status" value="1"/>
</dbReference>
<protein>
    <recommendedName>
        <fullName evidence="1">Elongation factor Ts</fullName>
        <shortName evidence="1">EF-Ts</shortName>
    </recommendedName>
</protein>
<accession>A0QVB9</accession>
<accession>I7G8N4</accession>
<comment type="function">
    <text evidence="1">Associates with the EF-Tu.GDP complex and induces the exchange of GDP to GTP. It remains bound to the aminoacyl-tRNA.EF-Tu.GTP complex up to the GTP hydrolysis stage on the ribosome.</text>
</comment>
<comment type="subcellular location">
    <subcellularLocation>
        <location evidence="1">Cytoplasm</location>
    </subcellularLocation>
</comment>
<comment type="similarity">
    <text evidence="1">Belongs to the EF-Ts family.</text>
</comment>
<keyword id="KW-0963">Cytoplasm</keyword>
<keyword id="KW-0251">Elongation factor</keyword>
<keyword id="KW-1017">Isopeptide bond</keyword>
<keyword id="KW-0648">Protein biosynthesis</keyword>
<keyword id="KW-1185">Reference proteome</keyword>
<keyword id="KW-0832">Ubl conjugation</keyword>
<feature type="initiator methionine" description="Removed" evidence="2">
    <location>
        <position position="1"/>
    </location>
</feature>
<feature type="chain" id="PRO_1000006128" description="Elongation factor Ts">
    <location>
        <begin position="2"/>
        <end position="275"/>
    </location>
</feature>
<feature type="region of interest" description="Involved in Mg(2+) ion dislocation from EF-Tu" evidence="1">
    <location>
        <begin position="76"/>
        <end position="79"/>
    </location>
</feature>
<feature type="cross-link" description="Isoglutamyl lysine isopeptide (Lys-Gln) (interchain with Q-Cter in protein Pup)" evidence="3">
    <location>
        <position position="36"/>
    </location>
</feature>
<evidence type="ECO:0000255" key="1">
    <source>
        <dbReference type="HAMAP-Rule" id="MF_00050"/>
    </source>
</evidence>
<evidence type="ECO:0000269" key="2">
    <source>
    </source>
</evidence>
<evidence type="ECO:0000269" key="3">
    <source>
    </source>
</evidence>
<sequence>MANYTAADVKRLRELTGAGMLDSKNALVEADGDFDKAVELLRIKGAKDVGKRAERATAEGLVAAKDGALIELNSETDFVAKNAEFQALADQIVAAAVAAKANDIETLKAAKTGDTTVEQAIADLSAKIGEKLELRRAAYFDGTVEAYLHKRAADLPPAVGVLVEYQAGDADKGKEAAHAVALQIAALKAKYLTREDVPEDIVANERRIAEETARNEGKPEQALPKIVEGRVTGFYKDVVLLDQPSVSDNKKTVKALLDEAGVTVTRFVRFEVGQA</sequence>
<name>EFTS_MYCS2</name>
<gene>
    <name evidence="1" type="primary">tsf</name>
    <name type="ordered locus">MSMEG_2520</name>
    <name type="ordered locus">MSMEI_2461</name>
</gene>
<proteinExistence type="evidence at protein level"/>
<reference key="1">
    <citation type="submission" date="2006-10" db="EMBL/GenBank/DDBJ databases">
        <authorList>
            <person name="Fleischmann R.D."/>
            <person name="Dodson R.J."/>
            <person name="Haft D.H."/>
            <person name="Merkel J.S."/>
            <person name="Nelson W.C."/>
            <person name="Fraser C.M."/>
        </authorList>
    </citation>
    <scope>NUCLEOTIDE SEQUENCE [LARGE SCALE GENOMIC DNA]</scope>
    <source>
        <strain>ATCC 700084 / mc(2)155</strain>
    </source>
</reference>
<reference key="2">
    <citation type="journal article" date="2007" name="Genome Biol.">
        <title>Interrupted coding sequences in Mycobacterium smegmatis: authentic mutations or sequencing errors?</title>
        <authorList>
            <person name="Deshayes C."/>
            <person name="Perrodou E."/>
            <person name="Gallien S."/>
            <person name="Euphrasie D."/>
            <person name="Schaeffer C."/>
            <person name="Van-Dorsselaer A."/>
            <person name="Poch O."/>
            <person name="Lecompte O."/>
            <person name="Reyrat J.-M."/>
        </authorList>
    </citation>
    <scope>NUCLEOTIDE SEQUENCE [LARGE SCALE GENOMIC DNA]</scope>
    <source>
        <strain>ATCC 700084 / mc(2)155</strain>
    </source>
</reference>
<reference key="3">
    <citation type="journal article" date="2009" name="Genome Res.">
        <title>Ortho-proteogenomics: multiple proteomes investigation through orthology and a new MS-based protocol.</title>
        <authorList>
            <person name="Gallien S."/>
            <person name="Perrodou E."/>
            <person name="Carapito C."/>
            <person name="Deshayes C."/>
            <person name="Reyrat J.-M."/>
            <person name="Van Dorsselaer A."/>
            <person name="Poch O."/>
            <person name="Schaeffer C."/>
            <person name="Lecompte O."/>
        </authorList>
    </citation>
    <scope>NUCLEOTIDE SEQUENCE [LARGE SCALE GENOMIC DNA]</scope>
    <scope>IDENTIFICATION BY MASS SPECTROMETRY [LARGE SCALE ANALYSIS]</scope>
    <scope>CLEAVAGE OF INITIATOR METHIONINE</scope>
    <source>
        <strain>ATCC 700084 / mc(2)155</strain>
    </source>
</reference>
<reference key="4">
    <citation type="journal article" date="2010" name="Mol. Biosyst.">
        <title>Expansion of the mycobacterial 'PUPylome'.</title>
        <authorList>
            <person name="Watrous J."/>
            <person name="Burns K."/>
            <person name="Liu W.T."/>
            <person name="Patel A."/>
            <person name="Hook V."/>
            <person name="Bafna V."/>
            <person name="Barry C.E. III"/>
            <person name="Bark S."/>
            <person name="Dorrestein P.C."/>
        </authorList>
    </citation>
    <scope>PUPYLATION AT LYS-36</scope>
    <scope>IDENTIFICATION BY MASS SPECTROMETRY</scope>
</reference>